<protein>
    <recommendedName>
        <fullName evidence="1">Photosystem I P700 chlorophyll a apoprotein A1</fullName>
        <ecNumber evidence="1">1.97.1.12</ecNumber>
    </recommendedName>
    <alternativeName>
        <fullName evidence="1">PsaA</fullName>
    </alternativeName>
</protein>
<evidence type="ECO:0000255" key="1">
    <source>
        <dbReference type="HAMAP-Rule" id="MF_00458"/>
    </source>
</evidence>
<keyword id="KW-0004">4Fe-4S</keyword>
<keyword id="KW-0148">Chlorophyll</keyword>
<keyword id="KW-0157">Chromophore</keyword>
<keyword id="KW-0249">Electron transport</keyword>
<keyword id="KW-0408">Iron</keyword>
<keyword id="KW-0411">Iron-sulfur</keyword>
<keyword id="KW-0460">Magnesium</keyword>
<keyword id="KW-0472">Membrane</keyword>
<keyword id="KW-0479">Metal-binding</keyword>
<keyword id="KW-0560">Oxidoreductase</keyword>
<keyword id="KW-0602">Photosynthesis</keyword>
<keyword id="KW-0603">Photosystem I</keyword>
<keyword id="KW-1185">Reference proteome</keyword>
<keyword id="KW-0793">Thylakoid</keyword>
<keyword id="KW-0812">Transmembrane</keyword>
<keyword id="KW-1133">Transmembrane helix</keyword>
<keyword id="KW-0813">Transport</keyword>
<feature type="chain" id="PRO_0000294206" description="Photosystem I P700 chlorophyll a apoprotein A1">
    <location>
        <begin position="1"/>
        <end position="767"/>
    </location>
</feature>
<feature type="transmembrane region" description="Helical; Name=I" evidence="1">
    <location>
        <begin position="72"/>
        <end position="95"/>
    </location>
</feature>
<feature type="transmembrane region" description="Helical; Name=II" evidence="1">
    <location>
        <begin position="158"/>
        <end position="181"/>
    </location>
</feature>
<feature type="transmembrane region" description="Helical; Name=III" evidence="1">
    <location>
        <begin position="197"/>
        <end position="221"/>
    </location>
</feature>
<feature type="transmembrane region" description="Helical; Name=IV" evidence="1">
    <location>
        <begin position="305"/>
        <end position="323"/>
    </location>
</feature>
<feature type="transmembrane region" description="Helical; Name=V" evidence="1">
    <location>
        <begin position="364"/>
        <end position="387"/>
    </location>
</feature>
<feature type="transmembrane region" description="Helical; Name=VI" evidence="1">
    <location>
        <begin position="403"/>
        <end position="429"/>
    </location>
</feature>
<feature type="transmembrane region" description="Helical; Name=VII" evidence="1">
    <location>
        <begin position="451"/>
        <end position="473"/>
    </location>
</feature>
<feature type="transmembrane region" description="Helical; Name=VIII" evidence="1">
    <location>
        <begin position="548"/>
        <end position="566"/>
    </location>
</feature>
<feature type="transmembrane region" description="Helical; Name=IX" evidence="1">
    <location>
        <begin position="606"/>
        <end position="627"/>
    </location>
</feature>
<feature type="transmembrane region" description="Helical; Name=X" evidence="1">
    <location>
        <begin position="681"/>
        <end position="703"/>
    </location>
</feature>
<feature type="transmembrane region" description="Helical; Name=XI" evidence="1">
    <location>
        <begin position="741"/>
        <end position="761"/>
    </location>
</feature>
<feature type="binding site" evidence="1">
    <location>
        <position position="590"/>
    </location>
    <ligand>
        <name>[4Fe-4S] cluster</name>
        <dbReference type="ChEBI" id="CHEBI:49883"/>
        <note>ligand shared between dimeric partners</note>
    </ligand>
</feature>
<feature type="binding site" evidence="1">
    <location>
        <position position="599"/>
    </location>
    <ligand>
        <name>[4Fe-4S] cluster</name>
        <dbReference type="ChEBI" id="CHEBI:49883"/>
        <note>ligand shared between dimeric partners</note>
    </ligand>
</feature>
<feature type="binding site" description="axial binding residue" evidence="1">
    <location>
        <position position="692"/>
    </location>
    <ligand>
        <name>chlorophyll a'</name>
        <dbReference type="ChEBI" id="CHEBI:189419"/>
        <label>A1</label>
    </ligand>
    <ligandPart>
        <name>Mg</name>
        <dbReference type="ChEBI" id="CHEBI:25107"/>
    </ligandPart>
</feature>
<feature type="binding site" description="axial binding residue" evidence="1">
    <location>
        <position position="700"/>
    </location>
    <ligand>
        <name>chlorophyll a</name>
        <dbReference type="ChEBI" id="CHEBI:58416"/>
        <label>A3</label>
    </ligand>
    <ligandPart>
        <name>Mg</name>
        <dbReference type="ChEBI" id="CHEBI:25107"/>
    </ligandPart>
</feature>
<feature type="binding site" evidence="1">
    <location>
        <position position="708"/>
    </location>
    <ligand>
        <name>chlorophyll a</name>
        <dbReference type="ChEBI" id="CHEBI:58416"/>
        <label>A3</label>
    </ligand>
</feature>
<feature type="binding site" evidence="1">
    <location>
        <position position="709"/>
    </location>
    <ligand>
        <name>phylloquinone</name>
        <dbReference type="ChEBI" id="CHEBI:18067"/>
        <label>A</label>
    </ligand>
</feature>
<proteinExistence type="inferred from homology"/>
<sequence length="767" mass="83681">MTISPPERGSTAKSQVEKVDNPATFELFGKPGHFDRALAKGPKTTTWVWNLHANAHDFDSHTSDLEEVSRKIFSAHFGHLAVIFIWLSGAFFHGARFSNFSGWLADPTHVKPSAQVVWPVFGQEILNGDMGAGFQGIQITSGLFHVWRAWGITNETQLMSLAIGALVMAGLMLNAGVFHYHKAAPKLEWFQNVESMLNHHLAGLLGLGSLSWTGHLLHVSLPTTKLMDAIDAGQPLVLNGKTIASVADIPLPHEFFNQDLIAQLYPGFGAGIGAFFSGDWAAYSDFLTFKGGINPVTGSMWMSDIAHHHLAIAVLFIVAGHMYRTNWGIGHSIKEILEGQKGDPLLFPATKGHDGLFEFMTTSWHAQLGVNLAMLGSLSIIVAQHMYAMPPYPYMAIDYPTQIGLFTHHMWIGGFLIVGAAAHAAIAMIRDYDPAKHVDNVLDRVLKARDAIISHLNWVCIWLGAHSFGLYVHNDTMRALGRPQDMFSDSAISIQPVFAQWIQGIHAGAAGSTAPNALAGVSEVFNGSTIAVGGKVAAAAIPLGTADFMVHHIHAFTIHVTVLILLKGVLYARSSRLVPDKANLGFRFPCDGPGRGGTCQVSAWDHVFLGLFWMYNSLSVVIFHFSWKMQSDVWGTVNADGSVQHITNGNFANSAITINGWLRDFLWAQAAQVINSYGSNTSAYGLMFLGAHFVWAFSLMFLFSGRGYWQELIESIVWAHNKLKVAPAIQPRALSITQGRAVGVAHYLLGGIATTWAFFHAHILVVG</sequence>
<organism>
    <name type="scientific">Synechococcus sp. (strain CC9311)</name>
    <dbReference type="NCBI Taxonomy" id="64471"/>
    <lineage>
        <taxon>Bacteria</taxon>
        <taxon>Bacillati</taxon>
        <taxon>Cyanobacteriota</taxon>
        <taxon>Cyanophyceae</taxon>
        <taxon>Synechococcales</taxon>
        <taxon>Synechococcaceae</taxon>
        <taxon>Synechococcus</taxon>
    </lineage>
</organism>
<dbReference type="EC" id="1.97.1.12" evidence="1"/>
<dbReference type="EMBL" id="CP000435">
    <property type="protein sequence ID" value="ABI47329.1"/>
    <property type="molecule type" value="Genomic_DNA"/>
</dbReference>
<dbReference type="RefSeq" id="WP_011618363.1">
    <property type="nucleotide sequence ID" value="NC_008319.1"/>
</dbReference>
<dbReference type="SMR" id="Q0ID48"/>
<dbReference type="STRING" id="64471.sync_0393"/>
<dbReference type="KEGG" id="syg:sync_0393"/>
<dbReference type="eggNOG" id="COG2885">
    <property type="taxonomic scope" value="Bacteria"/>
</dbReference>
<dbReference type="HOGENOM" id="CLU_016126_1_0_3"/>
<dbReference type="OrthoDB" id="499313at2"/>
<dbReference type="Proteomes" id="UP000001961">
    <property type="component" value="Chromosome"/>
</dbReference>
<dbReference type="GO" id="GO:0009522">
    <property type="term" value="C:photosystem I"/>
    <property type="evidence" value="ECO:0007669"/>
    <property type="project" value="UniProtKB-KW"/>
</dbReference>
<dbReference type="GO" id="GO:0031676">
    <property type="term" value="C:plasma membrane-derived thylakoid membrane"/>
    <property type="evidence" value="ECO:0007669"/>
    <property type="project" value="UniProtKB-SubCell"/>
</dbReference>
<dbReference type="GO" id="GO:0051539">
    <property type="term" value="F:4 iron, 4 sulfur cluster binding"/>
    <property type="evidence" value="ECO:0007669"/>
    <property type="project" value="UniProtKB-KW"/>
</dbReference>
<dbReference type="GO" id="GO:0016168">
    <property type="term" value="F:chlorophyll binding"/>
    <property type="evidence" value="ECO:0007669"/>
    <property type="project" value="UniProtKB-KW"/>
</dbReference>
<dbReference type="GO" id="GO:0009055">
    <property type="term" value="F:electron transfer activity"/>
    <property type="evidence" value="ECO:0007669"/>
    <property type="project" value="UniProtKB-UniRule"/>
</dbReference>
<dbReference type="GO" id="GO:0000287">
    <property type="term" value="F:magnesium ion binding"/>
    <property type="evidence" value="ECO:0007669"/>
    <property type="project" value="UniProtKB-UniRule"/>
</dbReference>
<dbReference type="GO" id="GO:0016491">
    <property type="term" value="F:oxidoreductase activity"/>
    <property type="evidence" value="ECO:0007669"/>
    <property type="project" value="UniProtKB-KW"/>
</dbReference>
<dbReference type="GO" id="GO:0015979">
    <property type="term" value="P:photosynthesis"/>
    <property type="evidence" value="ECO:0007669"/>
    <property type="project" value="UniProtKB-UniRule"/>
</dbReference>
<dbReference type="Gene3D" id="1.20.1130.10">
    <property type="entry name" value="Photosystem I PsaA/PsaB"/>
    <property type="match status" value="1"/>
</dbReference>
<dbReference type="HAMAP" id="MF_00458">
    <property type="entry name" value="PSI_PsaA"/>
    <property type="match status" value="1"/>
</dbReference>
<dbReference type="InterPro" id="IPR006243">
    <property type="entry name" value="PSI_PsaA"/>
</dbReference>
<dbReference type="InterPro" id="IPR001280">
    <property type="entry name" value="PSI_PsaA/B"/>
</dbReference>
<dbReference type="InterPro" id="IPR020586">
    <property type="entry name" value="PSI_PsaA/B_CS"/>
</dbReference>
<dbReference type="InterPro" id="IPR036408">
    <property type="entry name" value="PSI_PsaA/B_sf"/>
</dbReference>
<dbReference type="NCBIfam" id="TIGR01335">
    <property type="entry name" value="psaA"/>
    <property type="match status" value="1"/>
</dbReference>
<dbReference type="PANTHER" id="PTHR30128">
    <property type="entry name" value="OUTER MEMBRANE PROTEIN, OMPA-RELATED"/>
    <property type="match status" value="1"/>
</dbReference>
<dbReference type="PANTHER" id="PTHR30128:SF19">
    <property type="entry name" value="PHOTOSYSTEM I P700 CHLOROPHYLL A APOPROTEIN A1-RELATED"/>
    <property type="match status" value="1"/>
</dbReference>
<dbReference type="Pfam" id="PF00223">
    <property type="entry name" value="PsaA_PsaB"/>
    <property type="match status" value="1"/>
</dbReference>
<dbReference type="PIRSF" id="PIRSF002905">
    <property type="entry name" value="PSI_A"/>
    <property type="match status" value="1"/>
</dbReference>
<dbReference type="PRINTS" id="PR00257">
    <property type="entry name" value="PHOTSYSPSAAB"/>
</dbReference>
<dbReference type="SUPFAM" id="SSF81558">
    <property type="entry name" value="Photosystem I subunits PsaA/PsaB"/>
    <property type="match status" value="1"/>
</dbReference>
<dbReference type="PROSITE" id="PS00419">
    <property type="entry name" value="PHOTOSYSTEM_I_PSAAB"/>
    <property type="match status" value="1"/>
</dbReference>
<comment type="function">
    <text evidence="1">PsaA and PsaB bind P700, the primary electron donor of photosystem I (PSI), as well as the electron acceptors A0, A1 and FX. PSI is a plastocyanin/cytochrome c6-ferredoxin oxidoreductase, converting photonic excitation into a charge separation, which transfers an electron from the donor P700 chlorophyll pair to the spectroscopically characterized acceptors A0, A1, FX, FA and FB in turn. Oxidized P700 is reduced on the lumenal side of the thylakoid membrane by plastocyanin or cytochrome c6.</text>
</comment>
<comment type="catalytic activity">
    <reaction evidence="1">
        <text>reduced [plastocyanin] + hnu + oxidized [2Fe-2S]-[ferredoxin] = oxidized [plastocyanin] + reduced [2Fe-2S]-[ferredoxin]</text>
        <dbReference type="Rhea" id="RHEA:30407"/>
        <dbReference type="Rhea" id="RHEA-COMP:10000"/>
        <dbReference type="Rhea" id="RHEA-COMP:10001"/>
        <dbReference type="Rhea" id="RHEA-COMP:10039"/>
        <dbReference type="Rhea" id="RHEA-COMP:10040"/>
        <dbReference type="ChEBI" id="CHEBI:29036"/>
        <dbReference type="ChEBI" id="CHEBI:30212"/>
        <dbReference type="ChEBI" id="CHEBI:33737"/>
        <dbReference type="ChEBI" id="CHEBI:33738"/>
        <dbReference type="ChEBI" id="CHEBI:49552"/>
        <dbReference type="EC" id="1.97.1.12"/>
    </reaction>
</comment>
<comment type="cofactor">
    <text evidence="1">PSI electron transfer chain: 5 chlorophyll a, 1 chlorophyll a', 2 phylloquinones and 3 4Fe-4S clusters. PSI core antenna: 90 chlorophyll a, 22 carotenoids, 3 phospholipids and 1 galactolipid. P700 is a chlorophyll a/chlorophyll a' dimer, A0 is one or more chlorophyll a, A1 is one or both phylloquinones and FX is a shared 4Fe-4S iron-sulfur center.</text>
</comment>
<comment type="subunit">
    <text evidence="1">The PsaA/B heterodimer binds the P700 chlorophyll special pair and subsequent electron acceptors. PSI consists of a core antenna complex that captures photons, and an electron transfer chain that converts photonic excitation into a charge separation. The cyanobacterial PSI reaction center is composed of one copy each of PsaA,B,C,D,E,F,I,J,K,L,M and X, and forms trimeric complexes.</text>
</comment>
<comment type="subcellular location">
    <subcellularLocation>
        <location evidence="1">Cellular thylakoid membrane</location>
        <topology evidence="1">Multi-pass membrane protein</topology>
    </subcellularLocation>
</comment>
<comment type="similarity">
    <text evidence="1">Belongs to the PsaA/PsaB family.</text>
</comment>
<reference key="1">
    <citation type="journal article" date="2006" name="Proc. Natl. Acad. Sci. U.S.A.">
        <title>Genome sequence of Synechococcus CC9311: insights into adaptation to a coastal environment.</title>
        <authorList>
            <person name="Palenik B."/>
            <person name="Ren Q."/>
            <person name="Dupont C.L."/>
            <person name="Myers G.S."/>
            <person name="Heidelberg J.F."/>
            <person name="Badger J.H."/>
            <person name="Madupu R."/>
            <person name="Nelson W.C."/>
            <person name="Brinkac L.M."/>
            <person name="Dodson R.J."/>
            <person name="Durkin A.S."/>
            <person name="Daugherty S.C."/>
            <person name="Sullivan S.A."/>
            <person name="Khouri H."/>
            <person name="Mohamoud Y."/>
            <person name="Halpin R."/>
            <person name="Paulsen I.T."/>
        </authorList>
    </citation>
    <scope>NUCLEOTIDE SEQUENCE [LARGE SCALE GENOMIC DNA]</scope>
    <source>
        <strain>CC9311</strain>
    </source>
</reference>
<gene>
    <name evidence="1" type="primary">psaA</name>
    <name type="ordered locus">sync_0393</name>
</gene>
<accession>Q0ID48</accession>
<name>PSAA_SYNS3</name>